<gene>
    <name evidence="1" type="primary">rpmC</name>
    <name type="ordered locus">DSY0479</name>
</gene>
<organism>
    <name type="scientific">Desulfitobacterium hafniense (strain Y51)</name>
    <dbReference type="NCBI Taxonomy" id="138119"/>
    <lineage>
        <taxon>Bacteria</taxon>
        <taxon>Bacillati</taxon>
        <taxon>Bacillota</taxon>
        <taxon>Clostridia</taxon>
        <taxon>Eubacteriales</taxon>
        <taxon>Desulfitobacteriaceae</taxon>
        <taxon>Desulfitobacterium</taxon>
    </lineage>
</organism>
<proteinExistence type="inferred from homology"/>
<protein>
    <recommendedName>
        <fullName evidence="1">Large ribosomal subunit protein uL29</fullName>
    </recommendedName>
    <alternativeName>
        <fullName evidence="2">50S ribosomal protein L29</fullName>
    </alternativeName>
</protein>
<accession>Q250M4</accession>
<keyword id="KW-1185">Reference proteome</keyword>
<keyword id="KW-0687">Ribonucleoprotein</keyword>
<keyword id="KW-0689">Ribosomal protein</keyword>
<name>RL29_DESHY</name>
<comment type="similarity">
    <text evidence="1">Belongs to the universal ribosomal protein uL29 family.</text>
</comment>
<evidence type="ECO:0000255" key="1">
    <source>
        <dbReference type="HAMAP-Rule" id="MF_00374"/>
    </source>
</evidence>
<evidence type="ECO:0000305" key="2"/>
<reference key="1">
    <citation type="journal article" date="2006" name="J. Bacteriol.">
        <title>Complete genome sequence of the dehalorespiring bacterium Desulfitobacterium hafniense Y51 and comparison with Dehalococcoides ethenogenes 195.</title>
        <authorList>
            <person name="Nonaka H."/>
            <person name="Keresztes G."/>
            <person name="Shinoda Y."/>
            <person name="Ikenaga Y."/>
            <person name="Abe M."/>
            <person name="Naito K."/>
            <person name="Inatomi K."/>
            <person name="Furukawa K."/>
            <person name="Inui M."/>
            <person name="Yukawa H."/>
        </authorList>
    </citation>
    <scope>NUCLEOTIDE SEQUENCE [LARGE SCALE GENOMIC DNA]</scope>
    <source>
        <strain>Y51</strain>
    </source>
</reference>
<sequence>MKTKDFRDMTDEELLKEIDGFKTELFNLRFQLATGQLDNPARIREVRKGIARGKTILRERELKINRA</sequence>
<dbReference type="EMBL" id="AP008230">
    <property type="protein sequence ID" value="BAE82268.1"/>
    <property type="molecule type" value="Genomic_DNA"/>
</dbReference>
<dbReference type="RefSeq" id="WP_005810148.1">
    <property type="nucleotide sequence ID" value="NC_007907.1"/>
</dbReference>
<dbReference type="SMR" id="Q250M4"/>
<dbReference type="STRING" id="138119.DSY0479"/>
<dbReference type="KEGG" id="dsy:DSY0479"/>
<dbReference type="eggNOG" id="COG0255">
    <property type="taxonomic scope" value="Bacteria"/>
</dbReference>
<dbReference type="HOGENOM" id="CLU_158491_5_2_9"/>
<dbReference type="Proteomes" id="UP000001946">
    <property type="component" value="Chromosome"/>
</dbReference>
<dbReference type="GO" id="GO:0022625">
    <property type="term" value="C:cytosolic large ribosomal subunit"/>
    <property type="evidence" value="ECO:0007669"/>
    <property type="project" value="TreeGrafter"/>
</dbReference>
<dbReference type="GO" id="GO:0003735">
    <property type="term" value="F:structural constituent of ribosome"/>
    <property type="evidence" value="ECO:0007669"/>
    <property type="project" value="InterPro"/>
</dbReference>
<dbReference type="GO" id="GO:0006412">
    <property type="term" value="P:translation"/>
    <property type="evidence" value="ECO:0007669"/>
    <property type="project" value="UniProtKB-UniRule"/>
</dbReference>
<dbReference type="CDD" id="cd00427">
    <property type="entry name" value="Ribosomal_L29_HIP"/>
    <property type="match status" value="1"/>
</dbReference>
<dbReference type="FunFam" id="1.10.287.310:FF:000001">
    <property type="entry name" value="50S ribosomal protein L29"/>
    <property type="match status" value="1"/>
</dbReference>
<dbReference type="Gene3D" id="1.10.287.310">
    <property type="match status" value="1"/>
</dbReference>
<dbReference type="HAMAP" id="MF_00374">
    <property type="entry name" value="Ribosomal_uL29"/>
    <property type="match status" value="1"/>
</dbReference>
<dbReference type="InterPro" id="IPR050063">
    <property type="entry name" value="Ribosomal_protein_uL29"/>
</dbReference>
<dbReference type="InterPro" id="IPR001854">
    <property type="entry name" value="Ribosomal_uL29"/>
</dbReference>
<dbReference type="InterPro" id="IPR036049">
    <property type="entry name" value="Ribosomal_uL29_sf"/>
</dbReference>
<dbReference type="NCBIfam" id="TIGR00012">
    <property type="entry name" value="L29"/>
    <property type="match status" value="1"/>
</dbReference>
<dbReference type="PANTHER" id="PTHR10916">
    <property type="entry name" value="60S RIBOSOMAL PROTEIN L35/50S RIBOSOMAL PROTEIN L29"/>
    <property type="match status" value="1"/>
</dbReference>
<dbReference type="PANTHER" id="PTHR10916:SF0">
    <property type="entry name" value="LARGE RIBOSOMAL SUBUNIT PROTEIN UL29C"/>
    <property type="match status" value="1"/>
</dbReference>
<dbReference type="Pfam" id="PF00831">
    <property type="entry name" value="Ribosomal_L29"/>
    <property type="match status" value="1"/>
</dbReference>
<dbReference type="SUPFAM" id="SSF46561">
    <property type="entry name" value="Ribosomal protein L29 (L29p)"/>
    <property type="match status" value="1"/>
</dbReference>
<feature type="chain" id="PRO_1000007472" description="Large ribosomal subunit protein uL29">
    <location>
        <begin position="1"/>
        <end position="67"/>
    </location>
</feature>